<name>ADDA_STRP1</name>
<gene>
    <name evidence="1" type="primary">addA</name>
    <name type="synonym">rexA</name>
    <name type="ordered locus">SPy_0777</name>
    <name type="ordered locus">M5005_Spy0595</name>
</gene>
<organism>
    <name type="scientific">Streptococcus pyogenes serotype M1</name>
    <dbReference type="NCBI Taxonomy" id="301447"/>
    <lineage>
        <taxon>Bacteria</taxon>
        <taxon>Bacillati</taxon>
        <taxon>Bacillota</taxon>
        <taxon>Bacilli</taxon>
        <taxon>Lactobacillales</taxon>
        <taxon>Streptococcaceae</taxon>
        <taxon>Streptococcus</taxon>
    </lineage>
</organism>
<keyword id="KW-0067">ATP-binding</keyword>
<keyword id="KW-0227">DNA damage</keyword>
<keyword id="KW-0234">DNA repair</keyword>
<keyword id="KW-0238">DNA-binding</keyword>
<keyword id="KW-0269">Exonuclease</keyword>
<keyword id="KW-0347">Helicase</keyword>
<keyword id="KW-0378">Hydrolase</keyword>
<keyword id="KW-0413">Isomerase</keyword>
<keyword id="KW-0540">Nuclease</keyword>
<keyword id="KW-0547">Nucleotide-binding</keyword>
<keyword id="KW-1185">Reference proteome</keyword>
<feature type="chain" id="PRO_0000379340" description="ATP-dependent helicase/nuclease subunit A">
    <location>
        <begin position="1"/>
        <end position="1222"/>
    </location>
</feature>
<feature type="domain" description="UvrD-like helicase ATP-binding" evidence="1">
    <location>
        <begin position="27"/>
        <end position="483"/>
    </location>
</feature>
<feature type="domain" description="UvrD-like helicase C-terminal" evidence="1">
    <location>
        <begin position="512"/>
        <end position="798"/>
    </location>
</feature>
<feature type="binding site" evidence="1">
    <location>
        <begin position="48"/>
        <end position="55"/>
    </location>
    <ligand>
        <name>ATP</name>
        <dbReference type="ChEBI" id="CHEBI:30616"/>
    </ligand>
</feature>
<feature type="sequence conflict" description="In Ref. 2; AAZ51213." evidence="2" ref="2">
    <original>A</original>
    <variation>V</variation>
    <location>
        <position position="613"/>
    </location>
</feature>
<proteinExistence type="inferred from homology"/>
<dbReference type="EC" id="3.1.-.-" evidence="1"/>
<dbReference type="EC" id="5.6.2.4" evidence="1"/>
<dbReference type="EMBL" id="AE004092">
    <property type="protein sequence ID" value="AAK33717.1"/>
    <property type="status" value="ALT_INIT"/>
    <property type="molecule type" value="Genomic_DNA"/>
</dbReference>
<dbReference type="EMBL" id="CP000017">
    <property type="protein sequence ID" value="AAZ51213.1"/>
    <property type="molecule type" value="Genomic_DNA"/>
</dbReference>
<dbReference type="RefSeq" id="NP_268996.1">
    <property type="nucleotide sequence ID" value="NC_002737.2"/>
</dbReference>
<dbReference type="SMR" id="Q9A0H3"/>
<dbReference type="PaxDb" id="1314-HKU360_00606"/>
<dbReference type="KEGG" id="spy:SPy_0777"/>
<dbReference type="KEGG" id="spz:M5005_Spy0595"/>
<dbReference type="PATRIC" id="fig|160490.10.peg.663"/>
<dbReference type="HOGENOM" id="CLU_001114_3_1_9"/>
<dbReference type="OMA" id="EFSDIAH"/>
<dbReference type="Proteomes" id="UP000000750">
    <property type="component" value="Chromosome"/>
</dbReference>
<dbReference type="GO" id="GO:0005829">
    <property type="term" value="C:cytosol"/>
    <property type="evidence" value="ECO:0007669"/>
    <property type="project" value="TreeGrafter"/>
</dbReference>
<dbReference type="GO" id="GO:0033202">
    <property type="term" value="C:DNA helicase complex"/>
    <property type="evidence" value="ECO:0007669"/>
    <property type="project" value="TreeGrafter"/>
</dbReference>
<dbReference type="GO" id="GO:0043138">
    <property type="term" value="F:3'-5' DNA helicase activity"/>
    <property type="evidence" value="ECO:0007669"/>
    <property type="project" value="UniProtKB-UniRule"/>
</dbReference>
<dbReference type="GO" id="GO:0008408">
    <property type="term" value="F:3'-5' exonuclease activity"/>
    <property type="evidence" value="ECO:0007669"/>
    <property type="project" value="UniProtKB-UniRule"/>
</dbReference>
<dbReference type="GO" id="GO:0005524">
    <property type="term" value="F:ATP binding"/>
    <property type="evidence" value="ECO:0007669"/>
    <property type="project" value="UniProtKB-UniRule"/>
</dbReference>
<dbReference type="GO" id="GO:0016887">
    <property type="term" value="F:ATP hydrolysis activity"/>
    <property type="evidence" value="ECO:0007669"/>
    <property type="project" value="RHEA"/>
</dbReference>
<dbReference type="GO" id="GO:0003690">
    <property type="term" value="F:double-stranded DNA binding"/>
    <property type="evidence" value="ECO:0007669"/>
    <property type="project" value="UniProtKB-UniRule"/>
</dbReference>
<dbReference type="GO" id="GO:0000724">
    <property type="term" value="P:double-strand break repair via homologous recombination"/>
    <property type="evidence" value="ECO:0007669"/>
    <property type="project" value="UniProtKB-UniRule"/>
</dbReference>
<dbReference type="CDD" id="cd17932">
    <property type="entry name" value="DEXQc_UvrD"/>
    <property type="match status" value="1"/>
</dbReference>
<dbReference type="Gene3D" id="3.90.320.10">
    <property type="match status" value="1"/>
</dbReference>
<dbReference type="Gene3D" id="3.40.50.300">
    <property type="entry name" value="P-loop containing nucleotide triphosphate hydrolases"/>
    <property type="match status" value="4"/>
</dbReference>
<dbReference type="Gene3D" id="1.10.486.10">
    <property type="entry name" value="PCRA, domain 4"/>
    <property type="match status" value="1"/>
</dbReference>
<dbReference type="HAMAP" id="MF_01451">
    <property type="entry name" value="AddA"/>
    <property type="match status" value="1"/>
</dbReference>
<dbReference type="InterPro" id="IPR014152">
    <property type="entry name" value="AddA"/>
</dbReference>
<dbReference type="InterPro" id="IPR014017">
    <property type="entry name" value="DNA_helicase_UvrD-like_C"/>
</dbReference>
<dbReference type="InterPro" id="IPR000212">
    <property type="entry name" value="DNA_helicase_UvrD/REP"/>
</dbReference>
<dbReference type="InterPro" id="IPR027417">
    <property type="entry name" value="P-loop_NTPase"/>
</dbReference>
<dbReference type="InterPro" id="IPR011604">
    <property type="entry name" value="PDDEXK-like_dom_sf"/>
</dbReference>
<dbReference type="InterPro" id="IPR038726">
    <property type="entry name" value="PDDEXK_AddAB-type"/>
</dbReference>
<dbReference type="InterPro" id="IPR011335">
    <property type="entry name" value="Restrct_endonuc-II-like"/>
</dbReference>
<dbReference type="InterPro" id="IPR014016">
    <property type="entry name" value="UvrD-like_ATP-bd"/>
</dbReference>
<dbReference type="NCBIfam" id="TIGR02785">
    <property type="entry name" value="addA_Gpos"/>
    <property type="match status" value="1"/>
</dbReference>
<dbReference type="PANTHER" id="PTHR11070:SF48">
    <property type="entry name" value="ATP-DEPENDENT HELICASE_NUCLEASE SUBUNIT A"/>
    <property type="match status" value="1"/>
</dbReference>
<dbReference type="PANTHER" id="PTHR11070">
    <property type="entry name" value="UVRD / RECB / PCRA DNA HELICASE FAMILY MEMBER"/>
    <property type="match status" value="1"/>
</dbReference>
<dbReference type="Pfam" id="PF12705">
    <property type="entry name" value="PDDEXK_1"/>
    <property type="match status" value="1"/>
</dbReference>
<dbReference type="Pfam" id="PF00580">
    <property type="entry name" value="UvrD-helicase"/>
    <property type="match status" value="1"/>
</dbReference>
<dbReference type="Pfam" id="PF13361">
    <property type="entry name" value="UvrD_C"/>
    <property type="match status" value="1"/>
</dbReference>
<dbReference type="SUPFAM" id="SSF52540">
    <property type="entry name" value="P-loop containing nucleoside triphosphate hydrolases"/>
    <property type="match status" value="1"/>
</dbReference>
<dbReference type="SUPFAM" id="SSF52980">
    <property type="entry name" value="Restriction endonuclease-like"/>
    <property type="match status" value="1"/>
</dbReference>
<dbReference type="PROSITE" id="PS51198">
    <property type="entry name" value="UVRD_HELICASE_ATP_BIND"/>
    <property type="match status" value="1"/>
</dbReference>
<dbReference type="PROSITE" id="PS51217">
    <property type="entry name" value="UVRD_HELICASE_CTER"/>
    <property type="match status" value="1"/>
</dbReference>
<protein>
    <recommendedName>
        <fullName evidence="1">ATP-dependent helicase/nuclease subunit A</fullName>
        <ecNumber evidence="1">3.1.-.-</ecNumber>
        <ecNumber evidence="1">5.6.2.4</ecNumber>
    </recommendedName>
    <alternativeName>
        <fullName evidence="1">ATP-dependent helicase/nuclease AddA</fullName>
    </alternativeName>
    <alternativeName>
        <fullName evidence="1">DNA 3'-5' helicase AddA</fullName>
    </alternativeName>
</protein>
<accession>Q9A0H3</accession>
<accession>Q48ZK5</accession>
<evidence type="ECO:0000255" key="1">
    <source>
        <dbReference type="HAMAP-Rule" id="MF_01451"/>
    </source>
</evidence>
<evidence type="ECO:0000305" key="2"/>
<comment type="function">
    <text evidence="1">The heterodimer acts as both an ATP-dependent DNA helicase and an ATP-dependent, dual-direction single-stranded exonuclease. Recognizes the chi site generating a DNA molecule suitable for the initiation of homologous recombination. The AddA nuclease domain is required for chi fragment generation; this subunit has the helicase and 3' -&gt; 5' nuclease activities.</text>
</comment>
<comment type="catalytic activity">
    <reaction evidence="1">
        <text>Couples ATP hydrolysis with the unwinding of duplex DNA by translocating in the 3'-5' direction.</text>
        <dbReference type="EC" id="5.6.2.4"/>
    </reaction>
</comment>
<comment type="catalytic activity">
    <reaction evidence="1">
        <text>ATP + H2O = ADP + phosphate + H(+)</text>
        <dbReference type="Rhea" id="RHEA:13065"/>
        <dbReference type="ChEBI" id="CHEBI:15377"/>
        <dbReference type="ChEBI" id="CHEBI:15378"/>
        <dbReference type="ChEBI" id="CHEBI:30616"/>
        <dbReference type="ChEBI" id="CHEBI:43474"/>
        <dbReference type="ChEBI" id="CHEBI:456216"/>
        <dbReference type="EC" id="5.6.2.4"/>
    </reaction>
</comment>
<comment type="cofactor">
    <cofactor evidence="1">
        <name>Mg(2+)</name>
        <dbReference type="ChEBI" id="CHEBI:18420"/>
    </cofactor>
</comment>
<comment type="subunit">
    <text evidence="1">Heterodimer of AddA and AddB/RexB.</text>
</comment>
<comment type="similarity">
    <text evidence="1">Belongs to the helicase family. AddA subfamily.</text>
</comment>
<comment type="sequence caution" evidence="2">
    <conflict type="erroneous initiation">
        <sequence resource="EMBL-CDS" id="AAK33717"/>
    </conflict>
</comment>
<sequence>MLFNINEKGEPLVISFAPFLSPEAIKHLQENERCRDQSQKRTAQQIEAIYTSGQNILVSASAGSGKTFVMVERILDKILRGVSIDRLFISTFTVKAATELRERIENKLYSQIAQTTDFQMKVYLTEQLQSLCQADIGTMDAFAQKVVSRYGYSIGISSQFRIMQDKAEQDVLKQEVFSKLFNEFMNQKEAPVFRALVKNFSGNCKDTSAFRELVYTCYSFSQSTENPKIWLQENFLSAAKTYQRLEDIPDHDIELLLLAMQDTANQLRDVTDMEDYGQLTKAGSRSAKYTKHLTIIEKLSDWVRDFKCLYGKAGLDRLIRDVTGLIPSGNDVTVSKVKYPVFKTLHQKLKQFRHLETILMYQKDCFSLLEQLQDFVLAFSEAYLAVKIQESAFEFSDIAHFAIKILEENTDIRQSYQQHYHEVMVDEYQDNNHMQERLLTLLSNGHNRFMVGDIKQSIYRFRQADPQIFNQKFRDYQKKPEQGKVILLKENFRSQSEVLNVSNAVFSHLMDESVGDVLYDEQHQLIAGSHAQTVPYLDRRAQLLLYNSDKDDGNAPSDSEGISFSEVTIVAKEIIKLHNDKGVPFEDITLLVSSRTRNDIISHTFNQYGIPIATDGGQQNYLKSVEVMVMLDTLRTINNPRNDYALVALLRSPMFAFDEDDLARIALQKDNELDKDCLYDKIQRAVIGRGAHPELIHDTLLGKLNVFLKTLKSWRRYAKLGSLYDLIWKIFNDRFYFDFVASQAKAEQAQANLYALALRANQFEKSGYKGLYRFIKMIDKVLETQNDLADVEVATPKQAVNLMTIHKSKGLQFPYVFILNCDKRFSMTDIHKSFILNRQHGIGIKYLADIKGLLGETTLNSVKVSMETLPYQLNKQELRLATLSEEMRLLYVAMTRAEKKVYFIGKASKSKSQEITDPKKLGKLLPLALREQLLTFQDWLLAIADIFSTEDLYFDVRFIEDSDLTQESVGRLQTPQLLNPDDLKDNRQSETIARALDMLEAVSQLNANYEAAIHLPTVRTPSQLKATYEPLLEPIGVDIIEKSSRSLSDFTLPHFSKKAKVEASHIGSALHQLMQVLPLSKPINQQTLLDALRGIDSNEEVKTALDLKKIESFFCDTSLGQFFQTYQKHLYREAPFAILKLDPISQEEYVLRGIIDAYFLFDDHIVLVDYKTDKYKQPIELKKRYQQQLELYAEALTQTYKLPVTKRYLVLMGGGKPEIVEV</sequence>
<reference key="1">
    <citation type="journal article" date="2001" name="Proc. Natl. Acad. Sci. U.S.A.">
        <title>Complete genome sequence of an M1 strain of Streptococcus pyogenes.</title>
        <authorList>
            <person name="Ferretti J.J."/>
            <person name="McShan W.M."/>
            <person name="Ajdic D.J."/>
            <person name="Savic D.J."/>
            <person name="Savic G."/>
            <person name="Lyon K."/>
            <person name="Primeaux C."/>
            <person name="Sezate S."/>
            <person name="Suvorov A.N."/>
            <person name="Kenton S."/>
            <person name="Lai H.S."/>
            <person name="Lin S.P."/>
            <person name="Qian Y."/>
            <person name="Jia H.G."/>
            <person name="Najar F.Z."/>
            <person name="Ren Q."/>
            <person name="Zhu H."/>
            <person name="Song L."/>
            <person name="White J."/>
            <person name="Yuan X."/>
            <person name="Clifton S.W."/>
            <person name="Roe B.A."/>
            <person name="McLaughlin R.E."/>
        </authorList>
    </citation>
    <scope>NUCLEOTIDE SEQUENCE [LARGE SCALE GENOMIC DNA]</scope>
    <source>
        <strain>ATCC 700294 / SF370 / Serotype M1</strain>
    </source>
</reference>
<reference key="2">
    <citation type="journal article" date="2005" name="J. Infect. Dis.">
        <title>Evolutionary origin and emergence of a highly successful clone of serotype M1 group A Streptococcus involved multiple horizontal gene transfer events.</title>
        <authorList>
            <person name="Sumby P."/>
            <person name="Porcella S.F."/>
            <person name="Madrigal A.G."/>
            <person name="Barbian K.D."/>
            <person name="Virtaneva K."/>
            <person name="Ricklefs S.M."/>
            <person name="Sturdevant D.E."/>
            <person name="Graham M.R."/>
            <person name="Vuopio-Varkila J."/>
            <person name="Hoe N.P."/>
            <person name="Musser J.M."/>
        </authorList>
    </citation>
    <scope>NUCLEOTIDE SEQUENCE [LARGE SCALE GENOMIC DNA]</scope>
    <source>
        <strain>ATCC BAA-947 / MGAS5005 / Serotype M1</strain>
    </source>
</reference>